<reference key="1">
    <citation type="journal article" date="2001" name="Nature">
        <title>Genome sequence of enterohaemorrhagic Escherichia coli O157:H7.</title>
        <authorList>
            <person name="Perna N.T."/>
            <person name="Plunkett G. III"/>
            <person name="Burland V."/>
            <person name="Mau B."/>
            <person name="Glasner J.D."/>
            <person name="Rose D.J."/>
            <person name="Mayhew G.F."/>
            <person name="Evans P.S."/>
            <person name="Gregor J."/>
            <person name="Kirkpatrick H.A."/>
            <person name="Posfai G."/>
            <person name="Hackett J."/>
            <person name="Klink S."/>
            <person name="Boutin A."/>
            <person name="Shao Y."/>
            <person name="Miller L."/>
            <person name="Grotbeck E.J."/>
            <person name="Davis N.W."/>
            <person name="Lim A."/>
            <person name="Dimalanta E.T."/>
            <person name="Potamousis K."/>
            <person name="Apodaca J."/>
            <person name="Anantharaman T.S."/>
            <person name="Lin J."/>
            <person name="Yen G."/>
            <person name="Schwartz D.C."/>
            <person name="Welch R.A."/>
            <person name="Blattner F.R."/>
        </authorList>
    </citation>
    <scope>NUCLEOTIDE SEQUENCE [LARGE SCALE GENOMIC DNA]</scope>
    <source>
        <strain>O157:H7 / EDL933 / ATCC 700927 / EHEC</strain>
    </source>
</reference>
<reference key="2">
    <citation type="journal article" date="2001" name="DNA Res.">
        <title>Complete genome sequence of enterohemorrhagic Escherichia coli O157:H7 and genomic comparison with a laboratory strain K-12.</title>
        <authorList>
            <person name="Hayashi T."/>
            <person name="Makino K."/>
            <person name="Ohnishi M."/>
            <person name="Kurokawa K."/>
            <person name="Ishii K."/>
            <person name="Yokoyama K."/>
            <person name="Han C.-G."/>
            <person name="Ohtsubo E."/>
            <person name="Nakayama K."/>
            <person name="Murata T."/>
            <person name="Tanaka M."/>
            <person name="Tobe T."/>
            <person name="Iida T."/>
            <person name="Takami H."/>
            <person name="Honda T."/>
            <person name="Sasakawa C."/>
            <person name="Ogasawara N."/>
            <person name="Yasunaga T."/>
            <person name="Kuhara S."/>
            <person name="Shiba T."/>
            <person name="Hattori M."/>
            <person name="Shinagawa H."/>
        </authorList>
    </citation>
    <scope>NUCLEOTIDE SEQUENCE [LARGE SCALE GENOMIC DNA]</scope>
    <source>
        <strain>O157:H7 / Sakai / RIMD 0509952 / EHEC</strain>
    </source>
</reference>
<name>GUAA_ECO57</name>
<organism>
    <name type="scientific">Escherichia coli O157:H7</name>
    <dbReference type="NCBI Taxonomy" id="83334"/>
    <lineage>
        <taxon>Bacteria</taxon>
        <taxon>Pseudomonadati</taxon>
        <taxon>Pseudomonadota</taxon>
        <taxon>Gammaproteobacteria</taxon>
        <taxon>Enterobacterales</taxon>
        <taxon>Enterobacteriaceae</taxon>
        <taxon>Escherichia</taxon>
    </lineage>
</organism>
<sequence length="525" mass="58665">MTENIHKHRILILDFGSQYTQLVARRVRELGVYCELWAWDVTEAQIRDFNPSGIILSGGPESTTEENSPRAPQYVFEAGVPVFGVCYGMQTMAMQLGGHVEASNEREFGYAQVEVVNDSALVRGIEDALTADGKPLLDVWMSHGDKVTAIPSDFVTVASTESCPFAIMANEEKRFYGVQFHPEVTHTRQGMRMLERFVRDICQCEALWTPAKIIDDAVARIREQVGDDKVILGLSGGVDSSVTAMLLHRAIGKNLTCVFVDNGLLRLNEAEQVLDMFGDHFGLNIVHVPAEDRFLSALAGENDPEAKRKIIGRVFVEVFDEEALKLEDVKWLAQGTIYPDVIESAASATGKAHVIKSHHNVGGLPKEMKMGLVEPLKELFKDEVRKIGLELGLPYDMLYRHPFPGPGLGVRVLGEVKKEYCDLLRRADAIFIEELRKADLYDKVSQAFTVFLPVRSVGVMGDGRKYDWVVSLRAVETIDFMTAHWAHLPYDFLGRVSNRIINEVNGISRVVYDISGKPPATIEWE</sequence>
<dbReference type="EC" id="6.3.5.2" evidence="1"/>
<dbReference type="EMBL" id="AE005174">
    <property type="protein sequence ID" value="AAG57618.1"/>
    <property type="molecule type" value="Genomic_DNA"/>
</dbReference>
<dbReference type="EMBL" id="BA000007">
    <property type="protein sequence ID" value="BAB36792.1"/>
    <property type="molecule type" value="Genomic_DNA"/>
</dbReference>
<dbReference type="PIR" id="A91050">
    <property type="entry name" value="A91050"/>
</dbReference>
<dbReference type="PIR" id="F85894">
    <property type="entry name" value="F85894"/>
</dbReference>
<dbReference type="RefSeq" id="NP_311396.1">
    <property type="nucleotide sequence ID" value="NC_002695.1"/>
</dbReference>
<dbReference type="RefSeq" id="WP_000138282.1">
    <property type="nucleotide sequence ID" value="NZ_VOAI01000001.1"/>
</dbReference>
<dbReference type="SMR" id="P64295"/>
<dbReference type="STRING" id="155864.Z3771"/>
<dbReference type="MEROPS" id="C26.957"/>
<dbReference type="GeneID" id="75172615"/>
<dbReference type="GeneID" id="912290"/>
<dbReference type="KEGG" id="ece:Z3771"/>
<dbReference type="KEGG" id="ecs:ECs_3369"/>
<dbReference type="PATRIC" id="fig|386585.9.peg.3520"/>
<dbReference type="eggNOG" id="COG0518">
    <property type="taxonomic scope" value="Bacteria"/>
</dbReference>
<dbReference type="eggNOG" id="COG0519">
    <property type="taxonomic scope" value="Bacteria"/>
</dbReference>
<dbReference type="HOGENOM" id="CLU_014340_0_5_6"/>
<dbReference type="OMA" id="IWQSFAV"/>
<dbReference type="UniPathway" id="UPA00189">
    <property type="reaction ID" value="UER00296"/>
</dbReference>
<dbReference type="Proteomes" id="UP000000558">
    <property type="component" value="Chromosome"/>
</dbReference>
<dbReference type="Proteomes" id="UP000002519">
    <property type="component" value="Chromosome"/>
</dbReference>
<dbReference type="GO" id="GO:0005829">
    <property type="term" value="C:cytosol"/>
    <property type="evidence" value="ECO:0007669"/>
    <property type="project" value="TreeGrafter"/>
</dbReference>
<dbReference type="GO" id="GO:0005524">
    <property type="term" value="F:ATP binding"/>
    <property type="evidence" value="ECO:0007669"/>
    <property type="project" value="UniProtKB-UniRule"/>
</dbReference>
<dbReference type="GO" id="GO:0003921">
    <property type="term" value="F:GMP synthase activity"/>
    <property type="evidence" value="ECO:0007669"/>
    <property type="project" value="InterPro"/>
</dbReference>
<dbReference type="CDD" id="cd01742">
    <property type="entry name" value="GATase1_GMP_Synthase"/>
    <property type="match status" value="1"/>
</dbReference>
<dbReference type="CDD" id="cd01997">
    <property type="entry name" value="GMP_synthase_C"/>
    <property type="match status" value="1"/>
</dbReference>
<dbReference type="FunFam" id="3.30.300.10:FF:000002">
    <property type="entry name" value="GMP synthase [glutamine-hydrolyzing]"/>
    <property type="match status" value="1"/>
</dbReference>
<dbReference type="FunFam" id="3.40.50.620:FF:000001">
    <property type="entry name" value="GMP synthase [glutamine-hydrolyzing]"/>
    <property type="match status" value="1"/>
</dbReference>
<dbReference type="FunFam" id="3.40.50.880:FF:000001">
    <property type="entry name" value="GMP synthase [glutamine-hydrolyzing]"/>
    <property type="match status" value="1"/>
</dbReference>
<dbReference type="Gene3D" id="3.30.300.10">
    <property type="match status" value="1"/>
</dbReference>
<dbReference type="Gene3D" id="3.40.50.880">
    <property type="match status" value="1"/>
</dbReference>
<dbReference type="Gene3D" id="3.40.50.620">
    <property type="entry name" value="HUPs"/>
    <property type="match status" value="1"/>
</dbReference>
<dbReference type="HAMAP" id="MF_00344">
    <property type="entry name" value="GMP_synthase"/>
    <property type="match status" value="1"/>
</dbReference>
<dbReference type="InterPro" id="IPR029062">
    <property type="entry name" value="Class_I_gatase-like"/>
</dbReference>
<dbReference type="InterPro" id="IPR017926">
    <property type="entry name" value="GATASE"/>
</dbReference>
<dbReference type="InterPro" id="IPR001674">
    <property type="entry name" value="GMP_synth_C"/>
</dbReference>
<dbReference type="InterPro" id="IPR004739">
    <property type="entry name" value="GMP_synth_GATase"/>
</dbReference>
<dbReference type="InterPro" id="IPR022955">
    <property type="entry name" value="GMP_synthase"/>
</dbReference>
<dbReference type="InterPro" id="IPR025777">
    <property type="entry name" value="GMPS_ATP_PPase_dom"/>
</dbReference>
<dbReference type="InterPro" id="IPR022310">
    <property type="entry name" value="NAD/GMP_synthase"/>
</dbReference>
<dbReference type="InterPro" id="IPR014729">
    <property type="entry name" value="Rossmann-like_a/b/a_fold"/>
</dbReference>
<dbReference type="NCBIfam" id="TIGR00884">
    <property type="entry name" value="guaA_Cterm"/>
    <property type="match status" value="1"/>
</dbReference>
<dbReference type="NCBIfam" id="TIGR00888">
    <property type="entry name" value="guaA_Nterm"/>
    <property type="match status" value="1"/>
</dbReference>
<dbReference type="NCBIfam" id="NF000848">
    <property type="entry name" value="PRK00074.1"/>
    <property type="match status" value="1"/>
</dbReference>
<dbReference type="PANTHER" id="PTHR11922:SF2">
    <property type="entry name" value="GMP SYNTHASE [GLUTAMINE-HYDROLYZING]"/>
    <property type="match status" value="1"/>
</dbReference>
<dbReference type="PANTHER" id="PTHR11922">
    <property type="entry name" value="GMP SYNTHASE-RELATED"/>
    <property type="match status" value="1"/>
</dbReference>
<dbReference type="Pfam" id="PF00117">
    <property type="entry name" value="GATase"/>
    <property type="match status" value="1"/>
</dbReference>
<dbReference type="Pfam" id="PF00958">
    <property type="entry name" value="GMP_synt_C"/>
    <property type="match status" value="1"/>
</dbReference>
<dbReference type="Pfam" id="PF02540">
    <property type="entry name" value="NAD_synthase"/>
    <property type="match status" value="1"/>
</dbReference>
<dbReference type="PRINTS" id="PR00097">
    <property type="entry name" value="ANTSNTHASEII"/>
</dbReference>
<dbReference type="PRINTS" id="PR00099">
    <property type="entry name" value="CPSGATASE"/>
</dbReference>
<dbReference type="PRINTS" id="PR00096">
    <property type="entry name" value="GATASE"/>
</dbReference>
<dbReference type="SUPFAM" id="SSF52402">
    <property type="entry name" value="Adenine nucleotide alpha hydrolases-like"/>
    <property type="match status" value="1"/>
</dbReference>
<dbReference type="SUPFAM" id="SSF52317">
    <property type="entry name" value="Class I glutamine amidotransferase-like"/>
    <property type="match status" value="1"/>
</dbReference>
<dbReference type="SUPFAM" id="SSF54810">
    <property type="entry name" value="GMP synthetase C-terminal dimerisation domain"/>
    <property type="match status" value="1"/>
</dbReference>
<dbReference type="PROSITE" id="PS51273">
    <property type="entry name" value="GATASE_TYPE_1"/>
    <property type="match status" value="1"/>
</dbReference>
<dbReference type="PROSITE" id="PS51553">
    <property type="entry name" value="GMPS_ATP_PPASE"/>
    <property type="match status" value="1"/>
</dbReference>
<protein>
    <recommendedName>
        <fullName evidence="1">GMP synthase [glutamine-hydrolyzing]</fullName>
        <ecNumber evidence="1">6.3.5.2</ecNumber>
    </recommendedName>
    <alternativeName>
        <fullName evidence="1">GMP synthetase</fullName>
    </alternativeName>
    <alternativeName>
        <fullName evidence="1">Glutamine amidotransferase</fullName>
    </alternativeName>
</protein>
<comment type="function">
    <text evidence="1">Catalyzes the synthesis of GMP from XMP.</text>
</comment>
<comment type="catalytic activity">
    <reaction evidence="1">
        <text>XMP + L-glutamine + ATP + H2O = GMP + L-glutamate + AMP + diphosphate + 2 H(+)</text>
        <dbReference type="Rhea" id="RHEA:11680"/>
        <dbReference type="ChEBI" id="CHEBI:15377"/>
        <dbReference type="ChEBI" id="CHEBI:15378"/>
        <dbReference type="ChEBI" id="CHEBI:29985"/>
        <dbReference type="ChEBI" id="CHEBI:30616"/>
        <dbReference type="ChEBI" id="CHEBI:33019"/>
        <dbReference type="ChEBI" id="CHEBI:57464"/>
        <dbReference type="ChEBI" id="CHEBI:58115"/>
        <dbReference type="ChEBI" id="CHEBI:58359"/>
        <dbReference type="ChEBI" id="CHEBI:456215"/>
        <dbReference type="EC" id="6.3.5.2"/>
    </reaction>
</comment>
<comment type="pathway">
    <text evidence="1">Purine metabolism; GMP biosynthesis; GMP from XMP (L-Gln route): step 1/1.</text>
</comment>
<comment type="subunit">
    <text evidence="1">Homodimer.</text>
</comment>
<evidence type="ECO:0000255" key="1">
    <source>
        <dbReference type="HAMAP-Rule" id="MF_00344"/>
    </source>
</evidence>
<keyword id="KW-0067">ATP-binding</keyword>
<keyword id="KW-0315">Glutamine amidotransferase</keyword>
<keyword id="KW-0332">GMP biosynthesis</keyword>
<keyword id="KW-0436">Ligase</keyword>
<keyword id="KW-0547">Nucleotide-binding</keyword>
<keyword id="KW-0658">Purine biosynthesis</keyword>
<keyword id="KW-1185">Reference proteome</keyword>
<accession>P64295</accession>
<accession>Q8XAB5</accession>
<gene>
    <name evidence="1" type="primary">guaA</name>
    <name type="ordered locus">Z3771</name>
    <name type="ordered locus">ECs3369</name>
</gene>
<feature type="chain" id="PRO_0000140125" description="GMP synthase [glutamine-hydrolyzing]">
    <location>
        <begin position="1"/>
        <end position="525"/>
    </location>
</feature>
<feature type="domain" description="Glutamine amidotransferase type-1" evidence="1">
    <location>
        <begin position="9"/>
        <end position="207"/>
    </location>
</feature>
<feature type="domain" description="GMPS ATP-PPase" evidence="1">
    <location>
        <begin position="208"/>
        <end position="400"/>
    </location>
</feature>
<feature type="active site" description="Nucleophile" evidence="1">
    <location>
        <position position="86"/>
    </location>
</feature>
<feature type="active site" evidence="1">
    <location>
        <position position="181"/>
    </location>
</feature>
<feature type="active site" evidence="1">
    <location>
        <position position="183"/>
    </location>
</feature>
<feature type="binding site" evidence="1">
    <location>
        <begin position="235"/>
        <end position="241"/>
    </location>
    <ligand>
        <name>ATP</name>
        <dbReference type="ChEBI" id="CHEBI:30616"/>
    </ligand>
</feature>
<proteinExistence type="inferred from homology"/>